<accession>B4RC43</accession>
<protein>
    <recommendedName>
        <fullName evidence="2">Formamidopyrimidine-DNA glycosylase</fullName>
        <shortName evidence="2">Fapy-DNA glycosylase</shortName>
        <ecNumber evidence="2">3.2.2.23</ecNumber>
    </recommendedName>
    <alternativeName>
        <fullName evidence="2">DNA-(apurinic or apyrimidinic site) lyase MutM</fullName>
        <shortName evidence="2">AP lyase MutM</shortName>
        <ecNumber evidence="2">4.2.99.18</ecNumber>
    </alternativeName>
</protein>
<name>FPG_PHEZH</name>
<comment type="function">
    <text evidence="2">Involved in base excision repair of DNA damaged by oxidation or by mutagenic agents. Acts as a DNA glycosylase that recognizes and removes damaged bases. Has a preference for oxidized purines, such as 7,8-dihydro-8-oxoguanine (8-oxoG). Has AP (apurinic/apyrimidinic) lyase activity and introduces nicks in the DNA strand. Cleaves the DNA backbone by beta-delta elimination to generate a single-strand break at the site of the removed base with both 3'- and 5'-phosphates.</text>
</comment>
<comment type="catalytic activity">
    <reaction evidence="2">
        <text>Hydrolysis of DNA containing ring-opened 7-methylguanine residues, releasing 2,6-diamino-4-hydroxy-5-(N-methyl)formamidopyrimidine.</text>
        <dbReference type="EC" id="3.2.2.23"/>
    </reaction>
</comment>
<comment type="catalytic activity">
    <reaction evidence="2">
        <text>2'-deoxyribonucleotide-(2'-deoxyribose 5'-phosphate)-2'-deoxyribonucleotide-DNA = a 3'-end 2'-deoxyribonucleotide-(2,3-dehydro-2,3-deoxyribose 5'-phosphate)-DNA + a 5'-end 5'-phospho-2'-deoxyribonucleoside-DNA + H(+)</text>
        <dbReference type="Rhea" id="RHEA:66592"/>
        <dbReference type="Rhea" id="RHEA-COMP:13180"/>
        <dbReference type="Rhea" id="RHEA-COMP:16897"/>
        <dbReference type="Rhea" id="RHEA-COMP:17067"/>
        <dbReference type="ChEBI" id="CHEBI:15378"/>
        <dbReference type="ChEBI" id="CHEBI:136412"/>
        <dbReference type="ChEBI" id="CHEBI:157695"/>
        <dbReference type="ChEBI" id="CHEBI:167181"/>
        <dbReference type="EC" id="4.2.99.18"/>
    </reaction>
</comment>
<comment type="cofactor">
    <cofactor evidence="2">
        <name>Zn(2+)</name>
        <dbReference type="ChEBI" id="CHEBI:29105"/>
    </cofactor>
    <text evidence="2">Binds 1 zinc ion per subunit.</text>
</comment>
<comment type="subunit">
    <text evidence="2">Monomer.</text>
</comment>
<comment type="similarity">
    <text evidence="2">Belongs to the FPG family.</text>
</comment>
<organism>
    <name type="scientific">Phenylobacterium zucineum (strain HLK1)</name>
    <dbReference type="NCBI Taxonomy" id="450851"/>
    <lineage>
        <taxon>Bacteria</taxon>
        <taxon>Pseudomonadati</taxon>
        <taxon>Pseudomonadota</taxon>
        <taxon>Alphaproteobacteria</taxon>
        <taxon>Caulobacterales</taxon>
        <taxon>Caulobacteraceae</taxon>
        <taxon>Phenylobacterium</taxon>
    </lineage>
</organism>
<gene>
    <name evidence="2" type="primary">mutM</name>
    <name evidence="2" type="synonym">fpg</name>
    <name type="ordered locus">PHZ_c3427</name>
</gene>
<evidence type="ECO:0000250" key="1"/>
<evidence type="ECO:0000255" key="2">
    <source>
        <dbReference type="HAMAP-Rule" id="MF_00103"/>
    </source>
</evidence>
<dbReference type="EC" id="3.2.2.23" evidence="2"/>
<dbReference type="EC" id="4.2.99.18" evidence="2"/>
<dbReference type="EMBL" id="CP000747">
    <property type="protein sequence ID" value="ACG79836.1"/>
    <property type="molecule type" value="Genomic_DNA"/>
</dbReference>
<dbReference type="RefSeq" id="WP_012523974.1">
    <property type="nucleotide sequence ID" value="NC_011144.1"/>
</dbReference>
<dbReference type="SMR" id="B4RC43"/>
<dbReference type="STRING" id="450851.PHZ_c3427"/>
<dbReference type="KEGG" id="pzu:PHZ_c3427"/>
<dbReference type="eggNOG" id="COG0266">
    <property type="taxonomic scope" value="Bacteria"/>
</dbReference>
<dbReference type="HOGENOM" id="CLU_038423_1_1_5"/>
<dbReference type="OrthoDB" id="9800855at2"/>
<dbReference type="Proteomes" id="UP000001868">
    <property type="component" value="Chromosome"/>
</dbReference>
<dbReference type="GO" id="GO:0034039">
    <property type="term" value="F:8-oxo-7,8-dihydroguanine DNA N-glycosylase activity"/>
    <property type="evidence" value="ECO:0007669"/>
    <property type="project" value="TreeGrafter"/>
</dbReference>
<dbReference type="GO" id="GO:0140078">
    <property type="term" value="F:class I DNA-(apurinic or apyrimidinic site) endonuclease activity"/>
    <property type="evidence" value="ECO:0007669"/>
    <property type="project" value="UniProtKB-EC"/>
</dbReference>
<dbReference type="GO" id="GO:0003684">
    <property type="term" value="F:damaged DNA binding"/>
    <property type="evidence" value="ECO:0007669"/>
    <property type="project" value="InterPro"/>
</dbReference>
<dbReference type="GO" id="GO:0008270">
    <property type="term" value="F:zinc ion binding"/>
    <property type="evidence" value="ECO:0007669"/>
    <property type="project" value="UniProtKB-UniRule"/>
</dbReference>
<dbReference type="GO" id="GO:0006284">
    <property type="term" value="P:base-excision repair"/>
    <property type="evidence" value="ECO:0007669"/>
    <property type="project" value="InterPro"/>
</dbReference>
<dbReference type="CDD" id="cd08966">
    <property type="entry name" value="EcFpg-like_N"/>
    <property type="match status" value="1"/>
</dbReference>
<dbReference type="FunFam" id="1.10.8.50:FF:000003">
    <property type="entry name" value="Formamidopyrimidine-DNA glycosylase"/>
    <property type="match status" value="1"/>
</dbReference>
<dbReference type="Gene3D" id="1.10.8.50">
    <property type="match status" value="1"/>
</dbReference>
<dbReference type="Gene3D" id="3.20.190.10">
    <property type="entry name" value="MutM-like, N-terminal"/>
    <property type="match status" value="1"/>
</dbReference>
<dbReference type="HAMAP" id="MF_00103">
    <property type="entry name" value="Fapy_DNA_glycosyl"/>
    <property type="match status" value="1"/>
</dbReference>
<dbReference type="InterPro" id="IPR015886">
    <property type="entry name" value="DNA_glyclase/AP_lyase_DNA-bd"/>
</dbReference>
<dbReference type="InterPro" id="IPR020629">
    <property type="entry name" value="Formamido-pyr_DNA_Glyclase"/>
</dbReference>
<dbReference type="InterPro" id="IPR012319">
    <property type="entry name" value="FPG_cat"/>
</dbReference>
<dbReference type="InterPro" id="IPR035937">
    <property type="entry name" value="MutM-like_N-ter"/>
</dbReference>
<dbReference type="InterPro" id="IPR010979">
    <property type="entry name" value="Ribosomal_uS13-like_H2TH"/>
</dbReference>
<dbReference type="InterPro" id="IPR000214">
    <property type="entry name" value="Znf_DNA_glyclase/AP_lyase"/>
</dbReference>
<dbReference type="InterPro" id="IPR010663">
    <property type="entry name" value="Znf_FPG/IleRS"/>
</dbReference>
<dbReference type="NCBIfam" id="TIGR00577">
    <property type="entry name" value="fpg"/>
    <property type="match status" value="1"/>
</dbReference>
<dbReference type="NCBIfam" id="NF002211">
    <property type="entry name" value="PRK01103.1"/>
    <property type="match status" value="1"/>
</dbReference>
<dbReference type="PANTHER" id="PTHR22993">
    <property type="entry name" value="FORMAMIDOPYRIMIDINE-DNA GLYCOSYLASE"/>
    <property type="match status" value="1"/>
</dbReference>
<dbReference type="PANTHER" id="PTHR22993:SF9">
    <property type="entry name" value="FORMAMIDOPYRIMIDINE-DNA GLYCOSYLASE"/>
    <property type="match status" value="1"/>
</dbReference>
<dbReference type="Pfam" id="PF01149">
    <property type="entry name" value="Fapy_DNA_glyco"/>
    <property type="match status" value="1"/>
</dbReference>
<dbReference type="Pfam" id="PF06831">
    <property type="entry name" value="H2TH"/>
    <property type="match status" value="1"/>
</dbReference>
<dbReference type="Pfam" id="PF06827">
    <property type="entry name" value="zf-FPG_IleRS"/>
    <property type="match status" value="1"/>
</dbReference>
<dbReference type="SMART" id="SM00898">
    <property type="entry name" value="Fapy_DNA_glyco"/>
    <property type="match status" value="1"/>
</dbReference>
<dbReference type="SMART" id="SM01232">
    <property type="entry name" value="H2TH"/>
    <property type="match status" value="1"/>
</dbReference>
<dbReference type="SUPFAM" id="SSF57716">
    <property type="entry name" value="Glucocorticoid receptor-like (DNA-binding domain)"/>
    <property type="match status" value="1"/>
</dbReference>
<dbReference type="SUPFAM" id="SSF81624">
    <property type="entry name" value="N-terminal domain of MutM-like DNA repair proteins"/>
    <property type="match status" value="1"/>
</dbReference>
<dbReference type="SUPFAM" id="SSF46946">
    <property type="entry name" value="S13-like H2TH domain"/>
    <property type="match status" value="1"/>
</dbReference>
<dbReference type="PROSITE" id="PS51068">
    <property type="entry name" value="FPG_CAT"/>
    <property type="match status" value="1"/>
</dbReference>
<dbReference type="PROSITE" id="PS51066">
    <property type="entry name" value="ZF_FPG_2"/>
    <property type="match status" value="1"/>
</dbReference>
<proteinExistence type="inferred from homology"/>
<keyword id="KW-0227">DNA damage</keyword>
<keyword id="KW-0234">DNA repair</keyword>
<keyword id="KW-0238">DNA-binding</keyword>
<keyword id="KW-0326">Glycosidase</keyword>
<keyword id="KW-0378">Hydrolase</keyword>
<keyword id="KW-0456">Lyase</keyword>
<keyword id="KW-0479">Metal-binding</keyword>
<keyword id="KW-0511">Multifunctional enzyme</keyword>
<keyword id="KW-1185">Reference proteome</keyword>
<keyword id="KW-0862">Zinc</keyword>
<keyword id="KW-0863">Zinc-finger</keyword>
<feature type="initiator methionine" description="Removed" evidence="1">
    <location>
        <position position="1"/>
    </location>
</feature>
<feature type="chain" id="PRO_1000094060" description="Formamidopyrimidine-DNA glycosylase">
    <location>
        <begin position="2"/>
        <end position="287"/>
    </location>
</feature>
<feature type="zinc finger region" description="FPG-type" evidence="2">
    <location>
        <begin position="251"/>
        <end position="287"/>
    </location>
</feature>
<feature type="active site" description="Schiff-base intermediate with DNA" evidence="2">
    <location>
        <position position="2"/>
    </location>
</feature>
<feature type="active site" description="Proton donor" evidence="2">
    <location>
        <position position="3"/>
    </location>
</feature>
<feature type="active site" description="Proton donor; for beta-elimination activity" evidence="2">
    <location>
        <position position="58"/>
    </location>
</feature>
<feature type="active site" description="Proton donor; for delta-elimination activity" evidence="2">
    <location>
        <position position="277"/>
    </location>
</feature>
<feature type="binding site" evidence="2">
    <location>
        <position position="104"/>
    </location>
    <ligand>
        <name>DNA</name>
        <dbReference type="ChEBI" id="CHEBI:16991"/>
    </ligand>
</feature>
<feature type="binding site" evidence="2">
    <location>
        <position position="123"/>
    </location>
    <ligand>
        <name>DNA</name>
        <dbReference type="ChEBI" id="CHEBI:16991"/>
    </ligand>
</feature>
<feature type="binding site" evidence="2">
    <location>
        <position position="166"/>
    </location>
    <ligand>
        <name>DNA</name>
        <dbReference type="ChEBI" id="CHEBI:16991"/>
    </ligand>
</feature>
<reference key="1">
    <citation type="journal article" date="2008" name="BMC Genomics">
        <title>Complete genome of Phenylobacterium zucineum - a novel facultative intracellular bacterium isolated from human erythroleukemia cell line K562.</title>
        <authorList>
            <person name="Luo Y."/>
            <person name="Xu X."/>
            <person name="Ding Z."/>
            <person name="Liu Z."/>
            <person name="Zhang B."/>
            <person name="Yan Z."/>
            <person name="Sun J."/>
            <person name="Hu S."/>
            <person name="Hu X."/>
        </authorList>
    </citation>
    <scope>NUCLEOTIDE SEQUENCE [LARGE SCALE GENOMIC DNA]</scope>
    <source>
        <strain>HLK1</strain>
    </source>
</reference>
<sequence>MPELPEVETVRGGLAPVLEGRRLVRVEARRPDLRFPLPPGFVQILTGSTIVKLERRAKYLLGRLDREDTLVMHLGMSGRFEIAHPEGEERPGRFHYAPDPDPKHAHVVFETEAGVRITYYDPRRFGYMSLVNTATLDLHPWFAGLGPEPLSDDFDAAHLKAAFTGRRQGPKTLLLDQRIVAGLGNIYVCEALNRARISPFKPAGRISRPRIEVLVAAIKDVLREAIAAGGSTLRDYAQADGALGYFQHSFRTYDREGQPCRNDGCRGVIGREVQAGRSTFYCPVCQR</sequence>